<accession>Q87LK0</accession>
<protein>
    <recommendedName>
        <fullName evidence="1">UPF0301 protein VP2612</fullName>
    </recommendedName>
</protein>
<dbReference type="EMBL" id="BA000031">
    <property type="protein sequence ID" value="BAC60875.1"/>
    <property type="status" value="ALT_INIT"/>
    <property type="molecule type" value="Genomic_DNA"/>
</dbReference>
<dbReference type="RefSeq" id="NP_798991.2">
    <property type="nucleotide sequence ID" value="NC_004603.1"/>
</dbReference>
<dbReference type="RefSeq" id="WP_005461717.1">
    <property type="nucleotide sequence ID" value="NC_004603.1"/>
</dbReference>
<dbReference type="SMR" id="Q87LK0"/>
<dbReference type="GeneID" id="1190136"/>
<dbReference type="KEGG" id="vpa:VP2612"/>
<dbReference type="PATRIC" id="fig|223926.6.peg.2508"/>
<dbReference type="eggNOG" id="COG1678">
    <property type="taxonomic scope" value="Bacteria"/>
</dbReference>
<dbReference type="HOGENOM" id="CLU_057596_1_0_6"/>
<dbReference type="Proteomes" id="UP000002493">
    <property type="component" value="Chromosome 1"/>
</dbReference>
<dbReference type="GO" id="GO:0005829">
    <property type="term" value="C:cytosol"/>
    <property type="evidence" value="ECO:0007669"/>
    <property type="project" value="TreeGrafter"/>
</dbReference>
<dbReference type="Gene3D" id="3.40.1740.10">
    <property type="entry name" value="VC0467-like"/>
    <property type="match status" value="1"/>
</dbReference>
<dbReference type="Gene3D" id="3.30.70.1300">
    <property type="entry name" value="VC0467-like domains"/>
    <property type="match status" value="1"/>
</dbReference>
<dbReference type="HAMAP" id="MF_00758">
    <property type="entry name" value="UPF0301"/>
    <property type="match status" value="1"/>
</dbReference>
<dbReference type="InterPro" id="IPR003774">
    <property type="entry name" value="AlgH-like"/>
</dbReference>
<dbReference type="NCBIfam" id="NF001266">
    <property type="entry name" value="PRK00228.1-1"/>
    <property type="match status" value="1"/>
</dbReference>
<dbReference type="PANTHER" id="PTHR30327">
    <property type="entry name" value="UNCHARACTERIZED PROTEIN YQGE"/>
    <property type="match status" value="1"/>
</dbReference>
<dbReference type="PANTHER" id="PTHR30327:SF1">
    <property type="entry name" value="UPF0301 PROTEIN YQGE"/>
    <property type="match status" value="1"/>
</dbReference>
<dbReference type="Pfam" id="PF02622">
    <property type="entry name" value="DUF179"/>
    <property type="match status" value="1"/>
</dbReference>
<dbReference type="SUPFAM" id="SSF143456">
    <property type="entry name" value="VC0467-like"/>
    <property type="match status" value="1"/>
</dbReference>
<feature type="chain" id="PRO_0000214351" description="UPF0301 protein VP2612">
    <location>
        <begin position="1"/>
        <end position="187"/>
    </location>
</feature>
<proteinExistence type="inferred from homology"/>
<sequence length="187" mass="20712">MNLTNHFLVAMPGMKDPYFQNSVIYVCEHNEEGAMGLMINAPVDITVGNMLKQVDVQPVHPRLFEASLDRPVYNGGPISEDRGFILHKPKDYYESSIQMTDDLAVTTSRDILSVLGTEAEPSDYLVALGYSGWSAGQLENELVENSWLTIEATPEIIFDTPITERWKKAVEKLGIDPSQLSADAGHA</sequence>
<gene>
    <name type="ordered locus">VP2612</name>
</gene>
<name>Y2612_VIBPA</name>
<evidence type="ECO:0000255" key="1">
    <source>
        <dbReference type="HAMAP-Rule" id="MF_00758"/>
    </source>
</evidence>
<evidence type="ECO:0000305" key="2"/>
<comment type="similarity">
    <text evidence="1">Belongs to the UPF0301 (AlgH) family.</text>
</comment>
<comment type="sequence caution" evidence="2">
    <conflict type="erroneous initiation">
        <sequence resource="EMBL-CDS" id="BAC60875"/>
    </conflict>
</comment>
<reference key="1">
    <citation type="journal article" date="2003" name="Lancet">
        <title>Genome sequence of Vibrio parahaemolyticus: a pathogenic mechanism distinct from that of V. cholerae.</title>
        <authorList>
            <person name="Makino K."/>
            <person name="Oshima K."/>
            <person name="Kurokawa K."/>
            <person name="Yokoyama K."/>
            <person name="Uda T."/>
            <person name="Tagomori K."/>
            <person name="Iijima Y."/>
            <person name="Najima M."/>
            <person name="Nakano M."/>
            <person name="Yamashita A."/>
            <person name="Kubota Y."/>
            <person name="Kimura S."/>
            <person name="Yasunaga T."/>
            <person name="Honda T."/>
            <person name="Shinagawa H."/>
            <person name="Hattori M."/>
            <person name="Iida T."/>
        </authorList>
    </citation>
    <scope>NUCLEOTIDE SEQUENCE [LARGE SCALE GENOMIC DNA]</scope>
    <source>
        <strain>RIMD 2210633</strain>
    </source>
</reference>
<organism>
    <name type="scientific">Vibrio parahaemolyticus serotype O3:K6 (strain RIMD 2210633)</name>
    <dbReference type="NCBI Taxonomy" id="223926"/>
    <lineage>
        <taxon>Bacteria</taxon>
        <taxon>Pseudomonadati</taxon>
        <taxon>Pseudomonadota</taxon>
        <taxon>Gammaproteobacteria</taxon>
        <taxon>Vibrionales</taxon>
        <taxon>Vibrionaceae</taxon>
        <taxon>Vibrio</taxon>
    </lineage>
</organism>